<dbReference type="EC" id="3.5.99.6" evidence="1"/>
<dbReference type="EMBL" id="CP000308">
    <property type="protein sequence ID" value="ABG14435.1"/>
    <property type="molecule type" value="Genomic_DNA"/>
</dbReference>
<dbReference type="RefSeq" id="WP_002210352.1">
    <property type="nucleotide sequence ID" value="NZ_CP009906.1"/>
</dbReference>
<dbReference type="SMR" id="Q1C537"/>
<dbReference type="GeneID" id="57976064"/>
<dbReference type="KEGG" id="ypa:YPA_2470"/>
<dbReference type="UniPathway" id="UPA00629">
    <property type="reaction ID" value="UER00684"/>
</dbReference>
<dbReference type="Proteomes" id="UP000001971">
    <property type="component" value="Chromosome"/>
</dbReference>
<dbReference type="GO" id="GO:0005737">
    <property type="term" value="C:cytoplasm"/>
    <property type="evidence" value="ECO:0007669"/>
    <property type="project" value="TreeGrafter"/>
</dbReference>
<dbReference type="GO" id="GO:0004342">
    <property type="term" value="F:glucosamine-6-phosphate deaminase activity"/>
    <property type="evidence" value="ECO:0007669"/>
    <property type="project" value="UniProtKB-UniRule"/>
</dbReference>
<dbReference type="GO" id="GO:0042802">
    <property type="term" value="F:identical protein binding"/>
    <property type="evidence" value="ECO:0007669"/>
    <property type="project" value="TreeGrafter"/>
</dbReference>
<dbReference type="GO" id="GO:0005975">
    <property type="term" value="P:carbohydrate metabolic process"/>
    <property type="evidence" value="ECO:0007669"/>
    <property type="project" value="InterPro"/>
</dbReference>
<dbReference type="GO" id="GO:0006043">
    <property type="term" value="P:glucosamine catabolic process"/>
    <property type="evidence" value="ECO:0007669"/>
    <property type="project" value="TreeGrafter"/>
</dbReference>
<dbReference type="GO" id="GO:0006046">
    <property type="term" value="P:N-acetylglucosamine catabolic process"/>
    <property type="evidence" value="ECO:0007669"/>
    <property type="project" value="TreeGrafter"/>
</dbReference>
<dbReference type="GO" id="GO:0019262">
    <property type="term" value="P:N-acetylneuraminate catabolic process"/>
    <property type="evidence" value="ECO:0007669"/>
    <property type="project" value="UniProtKB-UniRule"/>
</dbReference>
<dbReference type="CDD" id="cd01399">
    <property type="entry name" value="GlcN6P_deaminase"/>
    <property type="match status" value="1"/>
</dbReference>
<dbReference type="FunFam" id="3.40.50.1360:FF:000002">
    <property type="entry name" value="Glucosamine-6-phosphate deaminase"/>
    <property type="match status" value="1"/>
</dbReference>
<dbReference type="Gene3D" id="3.40.50.1360">
    <property type="match status" value="1"/>
</dbReference>
<dbReference type="HAMAP" id="MF_01241">
    <property type="entry name" value="GlcN6P_deamin"/>
    <property type="match status" value="1"/>
</dbReference>
<dbReference type="InterPro" id="IPR006148">
    <property type="entry name" value="Glc/Gal-6P_isomerase"/>
</dbReference>
<dbReference type="InterPro" id="IPR004547">
    <property type="entry name" value="Glucosamine6P_isomerase"/>
</dbReference>
<dbReference type="InterPro" id="IPR018321">
    <property type="entry name" value="Glucosamine6P_isomerase_CS"/>
</dbReference>
<dbReference type="InterPro" id="IPR037171">
    <property type="entry name" value="NagB/RpiA_transferase-like"/>
</dbReference>
<dbReference type="NCBIfam" id="TIGR00502">
    <property type="entry name" value="nagB"/>
    <property type="match status" value="1"/>
</dbReference>
<dbReference type="NCBIfam" id="NF001685">
    <property type="entry name" value="PRK00443.1-5"/>
    <property type="match status" value="1"/>
</dbReference>
<dbReference type="PANTHER" id="PTHR11280">
    <property type="entry name" value="GLUCOSAMINE-6-PHOSPHATE ISOMERASE"/>
    <property type="match status" value="1"/>
</dbReference>
<dbReference type="PANTHER" id="PTHR11280:SF5">
    <property type="entry name" value="GLUCOSAMINE-6-PHOSPHATE ISOMERASE"/>
    <property type="match status" value="1"/>
</dbReference>
<dbReference type="Pfam" id="PF01182">
    <property type="entry name" value="Glucosamine_iso"/>
    <property type="match status" value="1"/>
</dbReference>
<dbReference type="SUPFAM" id="SSF100950">
    <property type="entry name" value="NagB/RpiA/CoA transferase-like"/>
    <property type="match status" value="1"/>
</dbReference>
<dbReference type="PROSITE" id="PS01161">
    <property type="entry name" value="GLC_GALNAC_ISOMERASE"/>
    <property type="match status" value="1"/>
</dbReference>
<sequence>MRLIPLRNTAEVGKWAARHIVNRINAFKPTAERPFILGLPTGGTPMEAYKYLIAMHKAGEVSFKHVVTFNMDEYVGLPKEHPESYYTFMHTNFFDHVDIPAENINLLNGNAADIDAECRRYEEKIKSYGKIHLFMGGVGVDGHIAFNEPASSLASRTRIKTLTQETRIANSRFFGGDANLVPKYALTVGVGTLLDAEEVMILVTGHGKAQALQAAVEGSINHMWTISCLQLHAKAIMVCDEPSTMELKVKTVKYFRELEAENVKDL</sequence>
<reference key="1">
    <citation type="journal article" date="2006" name="J. Bacteriol.">
        <title>Complete genome sequence of Yersinia pestis strains Antiqua and Nepal516: evidence of gene reduction in an emerging pathogen.</title>
        <authorList>
            <person name="Chain P.S.G."/>
            <person name="Hu P."/>
            <person name="Malfatti S.A."/>
            <person name="Radnedge L."/>
            <person name="Larimer F."/>
            <person name="Vergez L.M."/>
            <person name="Worsham P."/>
            <person name="Chu M.C."/>
            <person name="Andersen G.L."/>
        </authorList>
    </citation>
    <scope>NUCLEOTIDE SEQUENCE [LARGE SCALE GENOMIC DNA]</scope>
    <source>
        <strain>Antiqua</strain>
    </source>
</reference>
<comment type="function">
    <text evidence="1">Catalyzes the reversible isomerization-deamination of glucosamine 6-phosphate (GlcN6P) to form fructose 6-phosphate (Fru6P) and ammonium ion.</text>
</comment>
<comment type="catalytic activity">
    <reaction evidence="1">
        <text>alpha-D-glucosamine 6-phosphate + H2O = beta-D-fructose 6-phosphate + NH4(+)</text>
        <dbReference type="Rhea" id="RHEA:12172"/>
        <dbReference type="ChEBI" id="CHEBI:15377"/>
        <dbReference type="ChEBI" id="CHEBI:28938"/>
        <dbReference type="ChEBI" id="CHEBI:57634"/>
        <dbReference type="ChEBI" id="CHEBI:75989"/>
        <dbReference type="EC" id="3.5.99.6"/>
    </reaction>
</comment>
<comment type="activity regulation">
    <text evidence="1">Allosterically activated by N-acetylglucosamine 6-phosphate (GlcNAc6P).</text>
</comment>
<comment type="pathway">
    <text evidence="1">Amino-sugar metabolism; N-acetylneuraminate degradation; D-fructose 6-phosphate from N-acetylneuraminate: step 5/5.</text>
</comment>
<comment type="subunit">
    <text evidence="1">Homohexamer.</text>
</comment>
<comment type="similarity">
    <text evidence="1">Belongs to the glucosamine/galactosamine-6-phosphate isomerase family. NagB subfamily.</text>
</comment>
<proteinExistence type="inferred from homology"/>
<keyword id="KW-0021">Allosteric enzyme</keyword>
<keyword id="KW-0119">Carbohydrate metabolism</keyword>
<keyword id="KW-0378">Hydrolase</keyword>
<evidence type="ECO:0000255" key="1">
    <source>
        <dbReference type="HAMAP-Rule" id="MF_01241"/>
    </source>
</evidence>
<accession>Q1C537</accession>
<organism>
    <name type="scientific">Yersinia pestis bv. Antiqua (strain Antiqua)</name>
    <dbReference type="NCBI Taxonomy" id="360102"/>
    <lineage>
        <taxon>Bacteria</taxon>
        <taxon>Pseudomonadati</taxon>
        <taxon>Pseudomonadota</taxon>
        <taxon>Gammaproteobacteria</taxon>
        <taxon>Enterobacterales</taxon>
        <taxon>Yersiniaceae</taxon>
        <taxon>Yersinia</taxon>
    </lineage>
</organism>
<name>NAGB_YERPA</name>
<protein>
    <recommendedName>
        <fullName evidence="1">Glucosamine-6-phosphate deaminase</fullName>
        <ecNumber evidence="1">3.5.99.6</ecNumber>
    </recommendedName>
    <alternativeName>
        <fullName evidence="1">GlcN6P deaminase</fullName>
        <shortName evidence="1">GNPDA</shortName>
    </alternativeName>
    <alternativeName>
        <fullName evidence="1">Glucosamine-6-phosphate isomerase</fullName>
    </alternativeName>
</protein>
<gene>
    <name evidence="1" type="primary">nagB</name>
    <name type="ordered locus">YPA_2470</name>
</gene>
<feature type="chain" id="PRO_1000067038" description="Glucosamine-6-phosphate deaminase">
    <location>
        <begin position="1"/>
        <end position="266"/>
    </location>
</feature>
<feature type="active site" description="Proton acceptor; for enolization step" evidence="1">
    <location>
        <position position="72"/>
    </location>
</feature>
<feature type="active site" description="For ring-opening step" evidence="1">
    <location>
        <position position="141"/>
    </location>
</feature>
<feature type="active site" description="Proton acceptor; for ring-opening step" evidence="1">
    <location>
        <position position="143"/>
    </location>
</feature>
<feature type="active site" description="For ring-opening step" evidence="1">
    <location>
        <position position="148"/>
    </location>
</feature>
<feature type="site" description="Part of the allosteric site" evidence="1">
    <location>
        <position position="151"/>
    </location>
</feature>
<feature type="site" description="Part of the allosteric site" evidence="1">
    <location>
        <position position="158"/>
    </location>
</feature>
<feature type="site" description="Part of the allosteric site" evidence="1">
    <location>
        <position position="160"/>
    </location>
</feature>
<feature type="site" description="Part of the allosteric site" evidence="1">
    <location>
        <position position="161"/>
    </location>
</feature>
<feature type="site" description="Part of the allosteric site" evidence="1">
    <location>
        <position position="254"/>
    </location>
</feature>